<dbReference type="EMBL" id="Y13413">
    <property type="protein sequence ID" value="CAA73837.1"/>
    <property type="molecule type" value="mRNA"/>
</dbReference>
<dbReference type="RefSeq" id="NP_446409.1">
    <property type="nucleotide sequence ID" value="NM_053957.1"/>
</dbReference>
<dbReference type="SMR" id="O35827"/>
<dbReference type="FunCoup" id="O35827">
    <property type="interactions" value="869"/>
</dbReference>
<dbReference type="IntAct" id="O35827">
    <property type="interactions" value="2"/>
</dbReference>
<dbReference type="STRING" id="10116.ENSRNOP00000024313"/>
<dbReference type="PhosphoSitePlus" id="O35827"/>
<dbReference type="PaxDb" id="10116-ENSRNOP00000024313"/>
<dbReference type="GeneID" id="117026"/>
<dbReference type="KEGG" id="rno:117026"/>
<dbReference type="UCSC" id="RGD:620853">
    <property type="organism name" value="rat"/>
</dbReference>
<dbReference type="AGR" id="RGD:620853"/>
<dbReference type="CTD" id="10307"/>
<dbReference type="RGD" id="620853">
    <property type="gene designation" value="Apbb3"/>
</dbReference>
<dbReference type="eggNOG" id="ENOG502QR5N">
    <property type="taxonomic scope" value="Eukaryota"/>
</dbReference>
<dbReference type="InParanoid" id="O35827"/>
<dbReference type="PhylomeDB" id="O35827"/>
<dbReference type="PRO" id="PR:O35827"/>
<dbReference type="Proteomes" id="UP000002494">
    <property type="component" value="Unplaced"/>
</dbReference>
<dbReference type="GO" id="GO:0005737">
    <property type="term" value="C:cytoplasm"/>
    <property type="evidence" value="ECO:0000318"/>
    <property type="project" value="GO_Central"/>
</dbReference>
<dbReference type="GO" id="GO:0005829">
    <property type="term" value="C:cytosol"/>
    <property type="evidence" value="ECO:0000266"/>
    <property type="project" value="RGD"/>
</dbReference>
<dbReference type="GO" id="GO:0016020">
    <property type="term" value="C:membrane"/>
    <property type="evidence" value="ECO:0000266"/>
    <property type="project" value="RGD"/>
</dbReference>
<dbReference type="GO" id="GO:0005634">
    <property type="term" value="C:nucleus"/>
    <property type="evidence" value="ECO:0000314"/>
    <property type="project" value="UniProtKB"/>
</dbReference>
<dbReference type="GO" id="GO:0001540">
    <property type="term" value="F:amyloid-beta binding"/>
    <property type="evidence" value="ECO:0000353"/>
    <property type="project" value="RGD"/>
</dbReference>
<dbReference type="GO" id="GO:0050750">
    <property type="term" value="F:low-density lipoprotein particle receptor binding"/>
    <property type="evidence" value="ECO:0000266"/>
    <property type="project" value="RGD"/>
</dbReference>
<dbReference type="GO" id="GO:0060090">
    <property type="term" value="F:molecular adaptor activity"/>
    <property type="evidence" value="ECO:0000318"/>
    <property type="project" value="GO_Central"/>
</dbReference>
<dbReference type="GO" id="GO:1901988">
    <property type="term" value="P:negative regulation of cell cycle phase transition"/>
    <property type="evidence" value="ECO:0000314"/>
    <property type="project" value="UniProtKB"/>
</dbReference>
<dbReference type="GO" id="GO:0000122">
    <property type="term" value="P:negative regulation of transcription by RNA polymerase II"/>
    <property type="evidence" value="ECO:0000314"/>
    <property type="project" value="UniProtKB"/>
</dbReference>
<dbReference type="GO" id="GO:0050714">
    <property type="term" value="P:positive regulation of protein secretion"/>
    <property type="evidence" value="ECO:0000266"/>
    <property type="project" value="RGD"/>
</dbReference>
<dbReference type="GO" id="GO:0006355">
    <property type="term" value="P:regulation of DNA-templated transcription"/>
    <property type="evidence" value="ECO:0000318"/>
    <property type="project" value="GO_Central"/>
</dbReference>
<dbReference type="CDD" id="cd01272">
    <property type="entry name" value="PTB1_Fe65"/>
    <property type="match status" value="1"/>
</dbReference>
<dbReference type="CDD" id="cd01271">
    <property type="entry name" value="PTB2_Fe65"/>
    <property type="match status" value="1"/>
</dbReference>
<dbReference type="CDD" id="cd00201">
    <property type="entry name" value="WW"/>
    <property type="match status" value="1"/>
</dbReference>
<dbReference type="FunFam" id="2.20.70.10:FF:000003">
    <property type="entry name" value="amyloid beta A4 precursor protein-binding family B member 2"/>
    <property type="match status" value="1"/>
</dbReference>
<dbReference type="FunFam" id="2.30.29.30:FF:000153">
    <property type="entry name" value="amyloid beta A4 precursor protein-binding family B member 3 isoform X1"/>
    <property type="match status" value="1"/>
</dbReference>
<dbReference type="FunFam" id="2.30.29.30:FF:000143">
    <property type="entry name" value="amyloid beta A4 precursor protein-binding family B member 3 isoform X2"/>
    <property type="match status" value="1"/>
</dbReference>
<dbReference type="Gene3D" id="2.20.70.10">
    <property type="match status" value="1"/>
</dbReference>
<dbReference type="Gene3D" id="2.30.29.30">
    <property type="entry name" value="Pleckstrin-homology domain (PH domain)/Phosphotyrosine-binding domain (PTB)"/>
    <property type="match status" value="2"/>
</dbReference>
<dbReference type="InterPro" id="IPR039576">
    <property type="entry name" value="APBB1/2/3"/>
</dbReference>
<dbReference type="InterPro" id="IPR011993">
    <property type="entry name" value="PH-like_dom_sf"/>
</dbReference>
<dbReference type="InterPro" id="IPR006020">
    <property type="entry name" value="PTB/PI_dom"/>
</dbReference>
<dbReference type="InterPro" id="IPR001202">
    <property type="entry name" value="WW_dom"/>
</dbReference>
<dbReference type="InterPro" id="IPR036020">
    <property type="entry name" value="WW_dom_sf"/>
</dbReference>
<dbReference type="PANTHER" id="PTHR14058">
    <property type="entry name" value="AMYLOID BETA A4 PRECURSOR PROTEIN-BINDING FAMILY B"/>
    <property type="match status" value="1"/>
</dbReference>
<dbReference type="PANTHER" id="PTHR14058:SF10">
    <property type="entry name" value="AMYLOID-BETA A4 PRECURSOR PROTEIN-BINDING FAMILY B MEMBER 3"/>
    <property type="match status" value="1"/>
</dbReference>
<dbReference type="Pfam" id="PF00640">
    <property type="entry name" value="PID"/>
    <property type="match status" value="1"/>
</dbReference>
<dbReference type="Pfam" id="PF00397">
    <property type="entry name" value="WW"/>
    <property type="match status" value="1"/>
</dbReference>
<dbReference type="SMART" id="SM00462">
    <property type="entry name" value="PTB"/>
    <property type="match status" value="2"/>
</dbReference>
<dbReference type="SMART" id="SM00456">
    <property type="entry name" value="WW"/>
    <property type="match status" value="1"/>
</dbReference>
<dbReference type="SUPFAM" id="SSF50729">
    <property type="entry name" value="PH domain-like"/>
    <property type="match status" value="2"/>
</dbReference>
<dbReference type="SUPFAM" id="SSF51045">
    <property type="entry name" value="WW domain"/>
    <property type="match status" value="1"/>
</dbReference>
<dbReference type="PROSITE" id="PS01179">
    <property type="entry name" value="PID"/>
    <property type="match status" value="2"/>
</dbReference>
<dbReference type="PROSITE" id="PS01159">
    <property type="entry name" value="WW_DOMAIN_1"/>
    <property type="match status" value="1"/>
</dbReference>
<dbReference type="PROSITE" id="PS50020">
    <property type="entry name" value="WW_DOMAIN_2"/>
    <property type="match status" value="1"/>
</dbReference>
<keyword id="KW-0963">Cytoplasm</keyword>
<keyword id="KW-0539">Nucleus</keyword>
<keyword id="KW-1185">Reference proteome</keyword>
<keyword id="KW-0677">Repeat</keyword>
<accession>O35827</accession>
<protein>
    <recommendedName>
        <fullName>Amyloid-beta A4 precursor protein-binding family B member 3</fullName>
    </recommendedName>
    <alternativeName>
        <fullName>Protein Fe65-like 2</fullName>
        <shortName>Fe65L2</shortName>
    </alternativeName>
</protein>
<evidence type="ECO:0000250" key="1">
    <source>
        <dbReference type="UniProtKB" id="O95704"/>
    </source>
</evidence>
<evidence type="ECO:0000255" key="2">
    <source>
        <dbReference type="PROSITE-ProRule" id="PRU00148"/>
    </source>
</evidence>
<evidence type="ECO:0000255" key="3">
    <source>
        <dbReference type="PROSITE-ProRule" id="PRU00224"/>
    </source>
</evidence>
<evidence type="ECO:0000269" key="4">
    <source>
    </source>
</evidence>
<evidence type="ECO:0000312" key="5">
    <source>
        <dbReference type="RGD" id="620853"/>
    </source>
</evidence>
<name>APBB3_RAT</name>
<sequence length="504" mass="54907">MLGKDYMLAIILVNCDDDLWGDQNLEGETGLPPGWRKIRDAAGTYYWHVPSGSTQWQRPTWELAEDPGTGKEGIWELRPPKGRSFSSLDSSLNRSNSLTWYNEDSYVRSLEPGAKCFAVRSLGWVEVPEEDLAPGKSSIAVNNCIQQLAQARNRSQPHDGAWGEGQNMLMVLKKDAMSLLNPLDHSLIHCQPLVHIRVWGVGSSKGRDRDFAFVAGDKDSCMLKCHVFRCDVPAKAIASRLQGLCAQILSERVGLSGEAACCSPDPISPEDFPRQVELLDAVSQAAQKYEALYMGILPVTKAMGMDVLNEAIGTLTGRGDRKTWVPAMLSVSDSLMTAHPIQAEAGAEEEPLWQCPVRLVTFIGVGHDPHTFGLIADLGCQSFQCAAFWCQPHAGGLSEAVQAACMVQYQKCLVASAARGKAWGAQARARLRLKRTSSMDSPGGPLPPPLLKGGVGGAGAAPRKRGVFSFLDAFRLKPLFSICPKLILEGWGKRLYTLPVPRVL</sequence>
<organism>
    <name type="scientific">Rattus norvegicus</name>
    <name type="common">Rat</name>
    <dbReference type="NCBI Taxonomy" id="10116"/>
    <lineage>
        <taxon>Eukaryota</taxon>
        <taxon>Metazoa</taxon>
        <taxon>Chordata</taxon>
        <taxon>Craniata</taxon>
        <taxon>Vertebrata</taxon>
        <taxon>Euteleostomi</taxon>
        <taxon>Mammalia</taxon>
        <taxon>Eutheria</taxon>
        <taxon>Euarchontoglires</taxon>
        <taxon>Glires</taxon>
        <taxon>Rodentia</taxon>
        <taxon>Myomorpha</taxon>
        <taxon>Muroidea</taxon>
        <taxon>Muridae</taxon>
        <taxon>Murinae</taxon>
        <taxon>Rattus</taxon>
    </lineage>
</organism>
<proteinExistence type="evidence at protein level"/>
<gene>
    <name evidence="5" type="primary">Apbb3</name>
    <name evidence="5" type="synonym">Fe65l2</name>
</gene>
<reference key="1">
    <citation type="journal article" date="1998" name="Biochem. J.">
        <title>Fe65L2: a new member of the Fe65 protein family interacting with the intracellular domain of the Alzheimer's beta-amyloid precursor protein.</title>
        <authorList>
            <person name="Duilio A."/>
            <person name="Faraonio R."/>
            <person name="Minopoli G."/>
            <person name="Zambrano N."/>
            <person name="Russo T."/>
        </authorList>
    </citation>
    <scope>NUCLEOTIDE SEQUENCE [MRNA]</scope>
    <scope>INTERACTION WITH APP</scope>
    <scope>TISSUE SPECIFICITY</scope>
</reference>
<feature type="chain" id="PRO_0000076056" description="Amyloid-beta A4 precursor protein-binding family B member 3">
    <location>
        <begin position="1"/>
        <end position="504"/>
    </location>
</feature>
<feature type="domain" description="WW" evidence="3">
    <location>
        <begin position="29"/>
        <end position="61"/>
    </location>
</feature>
<feature type="domain" description="PID 1" evidence="2">
    <location>
        <begin position="111"/>
        <end position="278"/>
    </location>
</feature>
<feature type="domain" description="PID 2" evidence="2">
    <location>
        <begin position="283"/>
        <end position="438"/>
    </location>
</feature>
<comment type="function">
    <text>May modulate the internalization of amyloid-beta precursor protein.</text>
</comment>
<comment type="subunit">
    <text evidence="1 4">Interacts with APP (via intracellular domain) (PubMed:9461550). Interacts with APLP1 and APLP2 (via intracellular domain) (By similarity).</text>
</comment>
<comment type="subcellular location">
    <subcellularLocation>
        <location evidence="1">Cytoplasm</location>
    </subcellularLocation>
    <subcellularLocation>
        <location evidence="1">Nucleus</location>
    </subcellularLocation>
</comment>
<comment type="tissue specificity">
    <text evidence="4">Expressed predominantly in brain and testis.</text>
</comment>